<dbReference type="EMBL" id="CP000450">
    <property type="protein sequence ID" value="ABI60257.1"/>
    <property type="molecule type" value="Genomic_DNA"/>
</dbReference>
<dbReference type="RefSeq" id="WP_011635054.1">
    <property type="nucleotide sequence ID" value="NC_008344.1"/>
</dbReference>
<dbReference type="SMR" id="Q0AEH5"/>
<dbReference type="STRING" id="335283.Neut_2034"/>
<dbReference type="KEGG" id="net:Neut_2034"/>
<dbReference type="eggNOG" id="COG0264">
    <property type="taxonomic scope" value="Bacteria"/>
</dbReference>
<dbReference type="HOGENOM" id="CLU_047155_0_2_4"/>
<dbReference type="OrthoDB" id="9808348at2"/>
<dbReference type="Proteomes" id="UP000001966">
    <property type="component" value="Chromosome"/>
</dbReference>
<dbReference type="GO" id="GO:0005737">
    <property type="term" value="C:cytoplasm"/>
    <property type="evidence" value="ECO:0007669"/>
    <property type="project" value="UniProtKB-SubCell"/>
</dbReference>
<dbReference type="GO" id="GO:0003746">
    <property type="term" value="F:translation elongation factor activity"/>
    <property type="evidence" value="ECO:0007669"/>
    <property type="project" value="UniProtKB-UniRule"/>
</dbReference>
<dbReference type="CDD" id="cd14275">
    <property type="entry name" value="UBA_EF-Ts"/>
    <property type="match status" value="1"/>
</dbReference>
<dbReference type="FunFam" id="1.10.286.20:FF:000001">
    <property type="entry name" value="Elongation factor Ts"/>
    <property type="match status" value="1"/>
</dbReference>
<dbReference type="FunFam" id="1.10.8.10:FF:000001">
    <property type="entry name" value="Elongation factor Ts"/>
    <property type="match status" value="1"/>
</dbReference>
<dbReference type="Gene3D" id="1.10.286.20">
    <property type="match status" value="1"/>
</dbReference>
<dbReference type="Gene3D" id="1.10.8.10">
    <property type="entry name" value="DNA helicase RuvA subunit, C-terminal domain"/>
    <property type="match status" value="1"/>
</dbReference>
<dbReference type="Gene3D" id="3.30.479.20">
    <property type="entry name" value="Elongation factor Ts, dimerisation domain"/>
    <property type="match status" value="2"/>
</dbReference>
<dbReference type="HAMAP" id="MF_00050">
    <property type="entry name" value="EF_Ts"/>
    <property type="match status" value="1"/>
</dbReference>
<dbReference type="InterPro" id="IPR036402">
    <property type="entry name" value="EF-Ts_dimer_sf"/>
</dbReference>
<dbReference type="InterPro" id="IPR001816">
    <property type="entry name" value="Transl_elong_EFTs/EF1B"/>
</dbReference>
<dbReference type="InterPro" id="IPR014039">
    <property type="entry name" value="Transl_elong_EFTs/EF1B_dimer"/>
</dbReference>
<dbReference type="InterPro" id="IPR018101">
    <property type="entry name" value="Transl_elong_Ts_CS"/>
</dbReference>
<dbReference type="InterPro" id="IPR009060">
    <property type="entry name" value="UBA-like_sf"/>
</dbReference>
<dbReference type="NCBIfam" id="TIGR00116">
    <property type="entry name" value="tsf"/>
    <property type="match status" value="1"/>
</dbReference>
<dbReference type="PANTHER" id="PTHR11741">
    <property type="entry name" value="ELONGATION FACTOR TS"/>
    <property type="match status" value="1"/>
</dbReference>
<dbReference type="PANTHER" id="PTHR11741:SF0">
    <property type="entry name" value="ELONGATION FACTOR TS, MITOCHONDRIAL"/>
    <property type="match status" value="1"/>
</dbReference>
<dbReference type="Pfam" id="PF00889">
    <property type="entry name" value="EF_TS"/>
    <property type="match status" value="1"/>
</dbReference>
<dbReference type="SUPFAM" id="SSF54713">
    <property type="entry name" value="Elongation factor Ts (EF-Ts), dimerisation domain"/>
    <property type="match status" value="2"/>
</dbReference>
<dbReference type="SUPFAM" id="SSF46934">
    <property type="entry name" value="UBA-like"/>
    <property type="match status" value="1"/>
</dbReference>
<dbReference type="PROSITE" id="PS01126">
    <property type="entry name" value="EF_TS_1"/>
    <property type="match status" value="1"/>
</dbReference>
<dbReference type="PROSITE" id="PS01127">
    <property type="entry name" value="EF_TS_2"/>
    <property type="match status" value="1"/>
</dbReference>
<keyword id="KW-0963">Cytoplasm</keyword>
<keyword id="KW-0251">Elongation factor</keyword>
<keyword id="KW-0648">Protein biosynthesis</keyword>
<comment type="function">
    <text evidence="1">Associates with the EF-Tu.GDP complex and induces the exchange of GDP to GTP. It remains bound to the aminoacyl-tRNA.EF-Tu.GTP complex up to the GTP hydrolysis stage on the ribosome.</text>
</comment>
<comment type="subcellular location">
    <subcellularLocation>
        <location evidence="1">Cytoplasm</location>
    </subcellularLocation>
</comment>
<comment type="similarity">
    <text evidence="1">Belongs to the EF-Ts family.</text>
</comment>
<sequence>MAEITASMVKELRELTGLGMMECKKALSEAGGDMKAAEDLLRIRSGAKASKAAARIAAEGVISGFITVDGKQGALIEVNCETDFVAKNEDFINFAGDLAKLMVSQSVSDTALLAEMPLAGGETVESVRKALIMKLGENISIRRGISYHAEGRLAMYLHGSRIGVMVDYSGGDEALGKDIAMHIAASKPVCVSSAQVPVDLLEHERQIFTAQAAESGKPANIIEKMVEGRVTKYLAEVTLLGQPFVKDPEQTVEKLLKTKSAEVSNFTLYVVGEGIERKSDDFAAEVMAQVSQSK</sequence>
<gene>
    <name evidence="1" type="primary">tsf</name>
    <name type="ordered locus">Neut_2034</name>
</gene>
<organism>
    <name type="scientific">Nitrosomonas eutropha (strain DSM 101675 / C91 / Nm57)</name>
    <dbReference type="NCBI Taxonomy" id="335283"/>
    <lineage>
        <taxon>Bacteria</taxon>
        <taxon>Pseudomonadati</taxon>
        <taxon>Pseudomonadota</taxon>
        <taxon>Betaproteobacteria</taxon>
        <taxon>Nitrosomonadales</taxon>
        <taxon>Nitrosomonadaceae</taxon>
        <taxon>Nitrosomonas</taxon>
    </lineage>
</organism>
<proteinExistence type="inferred from homology"/>
<feature type="chain" id="PRO_1000006136" description="Elongation factor Ts">
    <location>
        <begin position="1"/>
        <end position="294"/>
    </location>
</feature>
<feature type="region of interest" description="Involved in Mg(2+) ion dislocation from EF-Tu" evidence="1">
    <location>
        <begin position="82"/>
        <end position="85"/>
    </location>
</feature>
<name>EFTS_NITEC</name>
<reference key="1">
    <citation type="journal article" date="2007" name="Environ. Microbiol.">
        <title>Whole-genome analysis of the ammonia-oxidizing bacterium, Nitrosomonas eutropha C91: implications for niche adaptation.</title>
        <authorList>
            <person name="Stein L.Y."/>
            <person name="Arp D.J."/>
            <person name="Berube P.M."/>
            <person name="Chain P.S."/>
            <person name="Hauser L."/>
            <person name="Jetten M.S."/>
            <person name="Klotz M.G."/>
            <person name="Larimer F.W."/>
            <person name="Norton J.M."/>
            <person name="Op den Camp H.J.M."/>
            <person name="Shin M."/>
            <person name="Wei X."/>
        </authorList>
    </citation>
    <scope>NUCLEOTIDE SEQUENCE [LARGE SCALE GENOMIC DNA]</scope>
    <source>
        <strain>DSM 101675 / C91 / Nm57</strain>
    </source>
</reference>
<protein>
    <recommendedName>
        <fullName evidence="1">Elongation factor Ts</fullName>
        <shortName evidence="1">EF-Ts</shortName>
    </recommendedName>
</protein>
<evidence type="ECO:0000255" key="1">
    <source>
        <dbReference type="HAMAP-Rule" id="MF_00050"/>
    </source>
</evidence>
<accession>Q0AEH5</accession>